<evidence type="ECO:0000255" key="1">
    <source>
        <dbReference type="HAMAP-Rule" id="MF_00111"/>
    </source>
</evidence>
<gene>
    <name evidence="1" type="primary">murA</name>
    <name type="ordered locus">ZMO1724</name>
</gene>
<proteinExistence type="inferred from homology"/>
<sequence>MDRIKIRGGHRLKGRIPVSGAKNAVLALMPASLLTSDSLTLINLPRLADVDSCCHLLNELGVSTMVARSKGDHPGREITLTADTIASTVAPYDIVRKMRASILVLGPLLAREGEATVSLPGGCAIGNRPIDLHLRALEALGAEIELTAGYVRARAPDGGLRGGIISFPVVSVGATENAIMAAVLARGETVINNAAREPEIVDLCQCLMAMGAKIDGVGNSRLVIHGCDRLHGATHVVMPDRIEAGSYACAAAITGGDVLLQGARSADMAEVLVELKESGLNISVEEDGIRVQADAPLKGLTLSTAPFPGFPTDMQAQFMAMLALAQGTSVLTETIFENRYMHVPELVRMGADIQVKGRVAVVKGVSGLVGAEVMATDLRASMSLIIAALAAEGETQVHRVYHLDRGYERLEEKLSAVGADIERVGG</sequence>
<dbReference type="EC" id="2.5.1.7" evidence="1"/>
<dbReference type="EMBL" id="AE008692">
    <property type="protein sequence ID" value="AAV90348.1"/>
    <property type="molecule type" value="Genomic_DNA"/>
</dbReference>
<dbReference type="RefSeq" id="WP_011241471.1">
    <property type="nucleotide sequence ID" value="NZ_CP035711.1"/>
</dbReference>
<dbReference type="SMR" id="Q5NLR2"/>
<dbReference type="STRING" id="264203.ZMO1724"/>
<dbReference type="GeneID" id="79904948"/>
<dbReference type="KEGG" id="zmo:ZMO1724"/>
<dbReference type="eggNOG" id="COG0766">
    <property type="taxonomic scope" value="Bacteria"/>
</dbReference>
<dbReference type="HOGENOM" id="CLU_027387_0_0_5"/>
<dbReference type="UniPathway" id="UPA00219"/>
<dbReference type="Proteomes" id="UP000001173">
    <property type="component" value="Chromosome"/>
</dbReference>
<dbReference type="GO" id="GO:0005737">
    <property type="term" value="C:cytoplasm"/>
    <property type="evidence" value="ECO:0007669"/>
    <property type="project" value="UniProtKB-SubCell"/>
</dbReference>
<dbReference type="GO" id="GO:0008760">
    <property type="term" value="F:UDP-N-acetylglucosamine 1-carboxyvinyltransferase activity"/>
    <property type="evidence" value="ECO:0007669"/>
    <property type="project" value="UniProtKB-UniRule"/>
</dbReference>
<dbReference type="GO" id="GO:0051301">
    <property type="term" value="P:cell division"/>
    <property type="evidence" value="ECO:0007669"/>
    <property type="project" value="UniProtKB-KW"/>
</dbReference>
<dbReference type="GO" id="GO:0071555">
    <property type="term" value="P:cell wall organization"/>
    <property type="evidence" value="ECO:0007669"/>
    <property type="project" value="UniProtKB-KW"/>
</dbReference>
<dbReference type="GO" id="GO:0009252">
    <property type="term" value="P:peptidoglycan biosynthetic process"/>
    <property type="evidence" value="ECO:0007669"/>
    <property type="project" value="UniProtKB-UniRule"/>
</dbReference>
<dbReference type="GO" id="GO:0008360">
    <property type="term" value="P:regulation of cell shape"/>
    <property type="evidence" value="ECO:0007669"/>
    <property type="project" value="UniProtKB-KW"/>
</dbReference>
<dbReference type="GO" id="GO:0019277">
    <property type="term" value="P:UDP-N-acetylgalactosamine biosynthetic process"/>
    <property type="evidence" value="ECO:0007669"/>
    <property type="project" value="InterPro"/>
</dbReference>
<dbReference type="CDD" id="cd01555">
    <property type="entry name" value="UdpNAET"/>
    <property type="match status" value="1"/>
</dbReference>
<dbReference type="FunFam" id="3.65.10.10:FF:000001">
    <property type="entry name" value="UDP-N-acetylglucosamine 1-carboxyvinyltransferase"/>
    <property type="match status" value="1"/>
</dbReference>
<dbReference type="Gene3D" id="3.65.10.10">
    <property type="entry name" value="Enolpyruvate transferase domain"/>
    <property type="match status" value="2"/>
</dbReference>
<dbReference type="HAMAP" id="MF_00111">
    <property type="entry name" value="MurA"/>
    <property type="match status" value="1"/>
</dbReference>
<dbReference type="InterPro" id="IPR001986">
    <property type="entry name" value="Enolpyruvate_Tfrase_dom"/>
</dbReference>
<dbReference type="InterPro" id="IPR036968">
    <property type="entry name" value="Enolpyruvate_Tfrase_sf"/>
</dbReference>
<dbReference type="InterPro" id="IPR050068">
    <property type="entry name" value="MurA_subfamily"/>
</dbReference>
<dbReference type="InterPro" id="IPR013792">
    <property type="entry name" value="RNA3'P_cycl/enolpyr_Trfase_a/b"/>
</dbReference>
<dbReference type="InterPro" id="IPR005750">
    <property type="entry name" value="UDP_GlcNAc_COvinyl_MurA"/>
</dbReference>
<dbReference type="NCBIfam" id="TIGR01072">
    <property type="entry name" value="murA"/>
    <property type="match status" value="1"/>
</dbReference>
<dbReference type="NCBIfam" id="NF006873">
    <property type="entry name" value="PRK09369.1"/>
    <property type="match status" value="1"/>
</dbReference>
<dbReference type="PANTHER" id="PTHR43783">
    <property type="entry name" value="UDP-N-ACETYLGLUCOSAMINE 1-CARBOXYVINYLTRANSFERASE"/>
    <property type="match status" value="1"/>
</dbReference>
<dbReference type="PANTHER" id="PTHR43783:SF1">
    <property type="entry name" value="UDP-N-ACETYLGLUCOSAMINE 1-CARBOXYVINYLTRANSFERASE"/>
    <property type="match status" value="1"/>
</dbReference>
<dbReference type="Pfam" id="PF00275">
    <property type="entry name" value="EPSP_synthase"/>
    <property type="match status" value="1"/>
</dbReference>
<dbReference type="SUPFAM" id="SSF55205">
    <property type="entry name" value="EPT/RTPC-like"/>
    <property type="match status" value="1"/>
</dbReference>
<organism>
    <name type="scientific">Zymomonas mobilis subsp. mobilis (strain ATCC 31821 / ZM4 / CP4)</name>
    <dbReference type="NCBI Taxonomy" id="264203"/>
    <lineage>
        <taxon>Bacteria</taxon>
        <taxon>Pseudomonadati</taxon>
        <taxon>Pseudomonadota</taxon>
        <taxon>Alphaproteobacteria</taxon>
        <taxon>Sphingomonadales</taxon>
        <taxon>Zymomonadaceae</taxon>
        <taxon>Zymomonas</taxon>
    </lineage>
</organism>
<feature type="chain" id="PRO_0000231305" description="UDP-N-acetylglucosamine 1-carboxyvinyltransferase">
    <location>
        <begin position="1"/>
        <end position="426"/>
    </location>
</feature>
<feature type="active site" description="Proton donor" evidence="1">
    <location>
        <position position="123"/>
    </location>
</feature>
<feature type="binding site" evidence="1">
    <location>
        <begin position="22"/>
        <end position="23"/>
    </location>
    <ligand>
        <name>phosphoenolpyruvate</name>
        <dbReference type="ChEBI" id="CHEBI:58702"/>
    </ligand>
</feature>
<feature type="binding site" evidence="1">
    <location>
        <position position="99"/>
    </location>
    <ligand>
        <name>UDP-N-acetyl-alpha-D-glucosamine</name>
        <dbReference type="ChEBI" id="CHEBI:57705"/>
    </ligand>
</feature>
<feature type="binding site" evidence="1">
    <location>
        <begin position="128"/>
        <end position="132"/>
    </location>
    <ligand>
        <name>UDP-N-acetyl-alpha-D-glucosamine</name>
        <dbReference type="ChEBI" id="CHEBI:57705"/>
    </ligand>
</feature>
<feature type="binding site" evidence="1">
    <location>
        <position position="313"/>
    </location>
    <ligand>
        <name>UDP-N-acetyl-alpha-D-glucosamine</name>
        <dbReference type="ChEBI" id="CHEBI:57705"/>
    </ligand>
</feature>
<feature type="binding site" evidence="1">
    <location>
        <position position="335"/>
    </location>
    <ligand>
        <name>UDP-N-acetyl-alpha-D-glucosamine</name>
        <dbReference type="ChEBI" id="CHEBI:57705"/>
    </ligand>
</feature>
<feature type="modified residue" description="2-(S-cysteinyl)pyruvic acid O-phosphothioketal" evidence="1">
    <location>
        <position position="123"/>
    </location>
</feature>
<keyword id="KW-0131">Cell cycle</keyword>
<keyword id="KW-0132">Cell division</keyword>
<keyword id="KW-0133">Cell shape</keyword>
<keyword id="KW-0961">Cell wall biogenesis/degradation</keyword>
<keyword id="KW-0963">Cytoplasm</keyword>
<keyword id="KW-0573">Peptidoglycan synthesis</keyword>
<keyword id="KW-0670">Pyruvate</keyword>
<keyword id="KW-1185">Reference proteome</keyword>
<keyword id="KW-0808">Transferase</keyword>
<accession>Q5NLR2</accession>
<protein>
    <recommendedName>
        <fullName evidence="1">UDP-N-acetylglucosamine 1-carboxyvinyltransferase</fullName>
        <ecNumber evidence="1">2.5.1.7</ecNumber>
    </recommendedName>
    <alternativeName>
        <fullName evidence="1">Enoylpyruvate transferase</fullName>
    </alternativeName>
    <alternativeName>
        <fullName evidence="1">UDP-N-acetylglucosamine enolpyruvyl transferase</fullName>
        <shortName evidence="1">EPT</shortName>
    </alternativeName>
</protein>
<reference key="1">
    <citation type="journal article" date="2005" name="Nat. Biotechnol.">
        <title>The genome sequence of the ethanologenic bacterium Zymomonas mobilis ZM4.</title>
        <authorList>
            <person name="Seo J.-S."/>
            <person name="Chong H."/>
            <person name="Park H.S."/>
            <person name="Yoon K.-O."/>
            <person name="Jung C."/>
            <person name="Kim J.J."/>
            <person name="Hong J.H."/>
            <person name="Kim H."/>
            <person name="Kim J.-H."/>
            <person name="Kil J.-I."/>
            <person name="Park C.J."/>
            <person name="Oh H.-M."/>
            <person name="Lee J.-S."/>
            <person name="Jin S.-J."/>
            <person name="Um H.-W."/>
            <person name="Lee H.-J."/>
            <person name="Oh S.-J."/>
            <person name="Kim J.Y."/>
            <person name="Kang H.L."/>
            <person name="Lee S.Y."/>
            <person name="Lee K.J."/>
            <person name="Kang H.S."/>
        </authorList>
    </citation>
    <scope>NUCLEOTIDE SEQUENCE [LARGE SCALE GENOMIC DNA]</scope>
    <source>
        <strain>ATCC 31821 / ZM4 / CP4</strain>
    </source>
</reference>
<comment type="function">
    <text evidence="1">Cell wall formation. Adds enolpyruvyl to UDP-N-acetylglucosamine.</text>
</comment>
<comment type="catalytic activity">
    <reaction evidence="1">
        <text>phosphoenolpyruvate + UDP-N-acetyl-alpha-D-glucosamine = UDP-N-acetyl-3-O-(1-carboxyvinyl)-alpha-D-glucosamine + phosphate</text>
        <dbReference type="Rhea" id="RHEA:18681"/>
        <dbReference type="ChEBI" id="CHEBI:43474"/>
        <dbReference type="ChEBI" id="CHEBI:57705"/>
        <dbReference type="ChEBI" id="CHEBI:58702"/>
        <dbReference type="ChEBI" id="CHEBI:68483"/>
        <dbReference type="EC" id="2.5.1.7"/>
    </reaction>
</comment>
<comment type="pathway">
    <text evidence="1">Cell wall biogenesis; peptidoglycan biosynthesis.</text>
</comment>
<comment type="subcellular location">
    <subcellularLocation>
        <location evidence="1">Cytoplasm</location>
    </subcellularLocation>
</comment>
<comment type="similarity">
    <text evidence="1">Belongs to the EPSP synthase family. MurA subfamily.</text>
</comment>
<name>MURA_ZYMMO</name>